<protein>
    <recommendedName>
        <fullName evidence="1">Glutamyl-tRNA reductase</fullName>
        <shortName evidence="1">GluTR</shortName>
        <ecNumber evidence="1">1.2.1.70</ecNumber>
    </recommendedName>
</protein>
<comment type="function">
    <text evidence="1">Catalyzes the NADPH-dependent reduction of glutamyl-tRNA(Glu) to glutamate 1-semialdehyde (GSA).</text>
</comment>
<comment type="catalytic activity">
    <reaction evidence="1">
        <text>(S)-4-amino-5-oxopentanoate + tRNA(Glu) + NADP(+) = L-glutamyl-tRNA(Glu) + NADPH + H(+)</text>
        <dbReference type="Rhea" id="RHEA:12344"/>
        <dbReference type="Rhea" id="RHEA-COMP:9663"/>
        <dbReference type="Rhea" id="RHEA-COMP:9680"/>
        <dbReference type="ChEBI" id="CHEBI:15378"/>
        <dbReference type="ChEBI" id="CHEBI:57501"/>
        <dbReference type="ChEBI" id="CHEBI:57783"/>
        <dbReference type="ChEBI" id="CHEBI:58349"/>
        <dbReference type="ChEBI" id="CHEBI:78442"/>
        <dbReference type="ChEBI" id="CHEBI:78520"/>
        <dbReference type="EC" id="1.2.1.70"/>
    </reaction>
</comment>
<comment type="pathway">
    <text evidence="1">Porphyrin-containing compound metabolism; protoporphyrin-IX biosynthesis; 5-aminolevulinate from L-glutamyl-tRNA(Glu): step 1/2.</text>
</comment>
<comment type="pathway">
    <text evidence="1">Porphyrin-containing compound metabolism; chlorophyll biosynthesis.</text>
</comment>
<comment type="subunit">
    <text evidence="1">Homodimer.</text>
</comment>
<comment type="domain">
    <text evidence="1">Possesses an unusual extended V-shaped dimeric structure with each monomer consisting of three distinct domains arranged along a curved 'spinal' alpha-helix. The N-terminal catalytic domain specifically recognizes the glutamate moiety of the substrate. The second domain is the NADPH-binding domain, and the third C-terminal domain is responsible for dimerization.</text>
</comment>
<comment type="miscellaneous">
    <text evidence="1">During catalysis, the active site Cys acts as a nucleophile attacking the alpha-carbonyl group of tRNA-bound glutamate with the formation of a thioester intermediate between enzyme and glutamate, and the concomitant release of tRNA(Glu). The thioester intermediate is finally reduced by direct hydride transfer from NADPH, to form the product GSA.</text>
</comment>
<comment type="similarity">
    <text evidence="1">Belongs to the glutamyl-tRNA reductase family.</text>
</comment>
<feature type="chain" id="PRO_1000093130" description="Glutamyl-tRNA reductase">
    <location>
        <begin position="1"/>
        <end position="430"/>
    </location>
</feature>
<feature type="active site" description="Nucleophile" evidence="1">
    <location>
        <position position="50"/>
    </location>
</feature>
<feature type="binding site" evidence="1">
    <location>
        <begin position="49"/>
        <end position="52"/>
    </location>
    <ligand>
        <name>substrate</name>
    </ligand>
</feature>
<feature type="binding site" evidence="1">
    <location>
        <position position="109"/>
    </location>
    <ligand>
        <name>substrate</name>
    </ligand>
</feature>
<feature type="binding site" evidence="1">
    <location>
        <begin position="114"/>
        <end position="116"/>
    </location>
    <ligand>
        <name>substrate</name>
    </ligand>
</feature>
<feature type="binding site" evidence="1">
    <location>
        <position position="120"/>
    </location>
    <ligand>
        <name>substrate</name>
    </ligand>
</feature>
<feature type="binding site" evidence="1">
    <location>
        <begin position="189"/>
        <end position="194"/>
    </location>
    <ligand>
        <name>NADP(+)</name>
        <dbReference type="ChEBI" id="CHEBI:58349"/>
    </ligand>
</feature>
<feature type="site" description="Important for activity" evidence="1">
    <location>
        <position position="99"/>
    </location>
</feature>
<organism>
    <name type="scientific">Crocosphaera subtropica (strain ATCC 51142 / BH68)</name>
    <name type="common">Cyanothece sp. (strain ATCC 51142)</name>
    <dbReference type="NCBI Taxonomy" id="43989"/>
    <lineage>
        <taxon>Bacteria</taxon>
        <taxon>Bacillati</taxon>
        <taxon>Cyanobacteriota</taxon>
        <taxon>Cyanophyceae</taxon>
        <taxon>Oscillatoriophycideae</taxon>
        <taxon>Chroococcales</taxon>
        <taxon>Aphanothecaceae</taxon>
        <taxon>Crocosphaera</taxon>
        <taxon>Crocosphaera subtropica</taxon>
    </lineage>
</organism>
<sequence length="430" mass="47929">MNIAVVGLSHKTAPVEVREKLSIQEAKIEEALTHLKGYPHIEEVAVISTCNRLEIYAVVTDTEKGVVEITQFLSEIGHIPLSYLRRYLFTLLHQDAVRHLLRVAAGLESLVLGEGQILAQVKTTHKLSQKYKGIGRLLDRLFKQAITAGKRVRSETNIGTGAVSISSAAVELAITKVDDLATRNISIIGAGKMACLLVKHLVAKGATSITIVNRSQRRAEELAKKFPQAELTLVSLDEMMSVVGKSHLVFTSTGATEPILHQDNLREVVSAEQGLMLFDISVPRNVATNVQDLEIVEAYNVDDLKAVVAQNHASRRQMALEAEGLLEEEVEAFELWWRSLETVPTISCLRTKVESIREQELEKALSRLGTEFAEKHQEVIEALTRGIVNKILHEPMVQLRAQQDIEARQRCLQSLQMLFDLEIEIEKQFS</sequence>
<gene>
    <name evidence="1" type="primary">hemA</name>
    <name type="ordered locus">cce_3976</name>
</gene>
<accession>B1WQ09</accession>
<keyword id="KW-0149">Chlorophyll biosynthesis</keyword>
<keyword id="KW-0521">NADP</keyword>
<keyword id="KW-0560">Oxidoreductase</keyword>
<keyword id="KW-0627">Porphyrin biosynthesis</keyword>
<keyword id="KW-1185">Reference proteome</keyword>
<reference key="1">
    <citation type="journal article" date="2008" name="Proc. Natl. Acad. Sci. U.S.A.">
        <title>The genome of Cyanothece 51142, a unicellular diazotrophic cyanobacterium important in the marine nitrogen cycle.</title>
        <authorList>
            <person name="Welsh E.A."/>
            <person name="Liberton M."/>
            <person name="Stoeckel J."/>
            <person name="Loh T."/>
            <person name="Elvitigala T."/>
            <person name="Wang C."/>
            <person name="Wollam A."/>
            <person name="Fulton R.S."/>
            <person name="Clifton S.W."/>
            <person name="Jacobs J.M."/>
            <person name="Aurora R."/>
            <person name="Ghosh B.K."/>
            <person name="Sherman L.A."/>
            <person name="Smith R.D."/>
            <person name="Wilson R.K."/>
            <person name="Pakrasi H.B."/>
        </authorList>
    </citation>
    <scope>NUCLEOTIDE SEQUENCE [LARGE SCALE GENOMIC DNA]</scope>
    <source>
        <strain>ATCC 51142 / BH68</strain>
    </source>
</reference>
<dbReference type="EC" id="1.2.1.70" evidence="1"/>
<dbReference type="EMBL" id="CP000806">
    <property type="protein sequence ID" value="ACB53324.1"/>
    <property type="molecule type" value="Genomic_DNA"/>
</dbReference>
<dbReference type="RefSeq" id="WP_009543932.1">
    <property type="nucleotide sequence ID" value="NC_010546.1"/>
</dbReference>
<dbReference type="SMR" id="B1WQ09"/>
<dbReference type="STRING" id="43989.cce_3976"/>
<dbReference type="KEGG" id="cyt:cce_3976"/>
<dbReference type="eggNOG" id="COG0373">
    <property type="taxonomic scope" value="Bacteria"/>
</dbReference>
<dbReference type="HOGENOM" id="CLU_035113_2_1_3"/>
<dbReference type="OrthoDB" id="110209at2"/>
<dbReference type="UniPathway" id="UPA00251">
    <property type="reaction ID" value="UER00316"/>
</dbReference>
<dbReference type="UniPathway" id="UPA00668"/>
<dbReference type="Proteomes" id="UP000001203">
    <property type="component" value="Chromosome circular"/>
</dbReference>
<dbReference type="GO" id="GO:0008883">
    <property type="term" value="F:glutamyl-tRNA reductase activity"/>
    <property type="evidence" value="ECO:0007669"/>
    <property type="project" value="UniProtKB-UniRule"/>
</dbReference>
<dbReference type="GO" id="GO:0050661">
    <property type="term" value="F:NADP binding"/>
    <property type="evidence" value="ECO:0007669"/>
    <property type="project" value="InterPro"/>
</dbReference>
<dbReference type="GO" id="GO:0015995">
    <property type="term" value="P:chlorophyll biosynthetic process"/>
    <property type="evidence" value="ECO:0007669"/>
    <property type="project" value="UniProtKB-UniRule"/>
</dbReference>
<dbReference type="GO" id="GO:0006782">
    <property type="term" value="P:protoporphyrinogen IX biosynthetic process"/>
    <property type="evidence" value="ECO:0007669"/>
    <property type="project" value="UniProtKB-UniRule"/>
</dbReference>
<dbReference type="CDD" id="cd05213">
    <property type="entry name" value="NAD_bind_Glutamyl_tRNA_reduct"/>
    <property type="match status" value="1"/>
</dbReference>
<dbReference type="FunFam" id="3.30.460.30:FF:000001">
    <property type="entry name" value="Glutamyl-tRNA reductase"/>
    <property type="match status" value="1"/>
</dbReference>
<dbReference type="FunFam" id="3.40.50.720:FF:000031">
    <property type="entry name" value="Glutamyl-tRNA reductase"/>
    <property type="match status" value="1"/>
</dbReference>
<dbReference type="Gene3D" id="3.30.460.30">
    <property type="entry name" value="Glutamyl-tRNA reductase, N-terminal domain"/>
    <property type="match status" value="1"/>
</dbReference>
<dbReference type="Gene3D" id="3.40.50.720">
    <property type="entry name" value="NAD(P)-binding Rossmann-like Domain"/>
    <property type="match status" value="1"/>
</dbReference>
<dbReference type="HAMAP" id="MF_00087">
    <property type="entry name" value="Glu_tRNA_reductase"/>
    <property type="match status" value="1"/>
</dbReference>
<dbReference type="InterPro" id="IPR000343">
    <property type="entry name" value="4pyrrol_synth_GluRdtase"/>
</dbReference>
<dbReference type="InterPro" id="IPR015896">
    <property type="entry name" value="4pyrrol_synth_GluRdtase_dimer"/>
</dbReference>
<dbReference type="InterPro" id="IPR015895">
    <property type="entry name" value="4pyrrol_synth_GluRdtase_N"/>
</dbReference>
<dbReference type="InterPro" id="IPR018214">
    <property type="entry name" value="GluRdtase_CS"/>
</dbReference>
<dbReference type="InterPro" id="IPR036453">
    <property type="entry name" value="GluRdtase_dimer_dom_sf"/>
</dbReference>
<dbReference type="InterPro" id="IPR036343">
    <property type="entry name" value="GluRdtase_N_sf"/>
</dbReference>
<dbReference type="InterPro" id="IPR036291">
    <property type="entry name" value="NAD(P)-bd_dom_sf"/>
</dbReference>
<dbReference type="InterPro" id="IPR006151">
    <property type="entry name" value="Shikm_DH/Glu-tRNA_Rdtase"/>
</dbReference>
<dbReference type="NCBIfam" id="TIGR01035">
    <property type="entry name" value="hemA"/>
    <property type="match status" value="1"/>
</dbReference>
<dbReference type="NCBIfam" id="NF000744">
    <property type="entry name" value="PRK00045.1-3"/>
    <property type="match status" value="1"/>
</dbReference>
<dbReference type="PANTHER" id="PTHR43120">
    <property type="entry name" value="GLUTAMYL-TRNA REDUCTASE 1, CHLOROPLASTIC"/>
    <property type="match status" value="1"/>
</dbReference>
<dbReference type="PANTHER" id="PTHR43120:SF1">
    <property type="entry name" value="GLUTAMYL-TRNA REDUCTASE 1, CHLOROPLASTIC"/>
    <property type="match status" value="1"/>
</dbReference>
<dbReference type="Pfam" id="PF00745">
    <property type="entry name" value="GlutR_dimer"/>
    <property type="match status" value="1"/>
</dbReference>
<dbReference type="Pfam" id="PF05201">
    <property type="entry name" value="GlutR_N"/>
    <property type="match status" value="1"/>
</dbReference>
<dbReference type="Pfam" id="PF01488">
    <property type="entry name" value="Shikimate_DH"/>
    <property type="match status" value="1"/>
</dbReference>
<dbReference type="PIRSF" id="PIRSF000445">
    <property type="entry name" value="4pyrrol_synth_GluRdtase"/>
    <property type="match status" value="1"/>
</dbReference>
<dbReference type="SUPFAM" id="SSF69742">
    <property type="entry name" value="Glutamyl tRNA-reductase catalytic, N-terminal domain"/>
    <property type="match status" value="1"/>
</dbReference>
<dbReference type="SUPFAM" id="SSF69075">
    <property type="entry name" value="Glutamyl tRNA-reductase dimerization domain"/>
    <property type="match status" value="1"/>
</dbReference>
<dbReference type="SUPFAM" id="SSF51735">
    <property type="entry name" value="NAD(P)-binding Rossmann-fold domains"/>
    <property type="match status" value="1"/>
</dbReference>
<dbReference type="PROSITE" id="PS00747">
    <property type="entry name" value="GLUTR"/>
    <property type="match status" value="1"/>
</dbReference>
<proteinExistence type="inferred from homology"/>
<name>HEM1_CROS5</name>
<evidence type="ECO:0000255" key="1">
    <source>
        <dbReference type="HAMAP-Rule" id="MF_00087"/>
    </source>
</evidence>